<keyword id="KW-1185">Reference proteome</keyword>
<accession>O29646</accession>
<name>Y609_ARCFU</name>
<dbReference type="EMBL" id="AE000782">
    <property type="protein sequence ID" value="AAB90642.1"/>
    <property type="molecule type" value="Genomic_DNA"/>
</dbReference>
<dbReference type="PIR" id="A69326">
    <property type="entry name" value="A69326"/>
</dbReference>
<dbReference type="PaxDb" id="224325-AF_0609"/>
<dbReference type="EnsemblBacteria" id="AAB90642">
    <property type="protein sequence ID" value="AAB90642"/>
    <property type="gene ID" value="AF_0609"/>
</dbReference>
<dbReference type="KEGG" id="afu:AF_0609"/>
<dbReference type="eggNOG" id="arCOG07520">
    <property type="taxonomic scope" value="Archaea"/>
</dbReference>
<dbReference type="HOGENOM" id="CLU_3353794_0_0_2"/>
<dbReference type="Proteomes" id="UP000002199">
    <property type="component" value="Chromosome"/>
</dbReference>
<dbReference type="Gene3D" id="1.10.10.10">
    <property type="entry name" value="Winged helix-like DNA-binding domain superfamily/Winged helix DNA-binding domain"/>
    <property type="match status" value="1"/>
</dbReference>
<dbReference type="InterPro" id="IPR007367">
    <property type="entry name" value="DUF433"/>
</dbReference>
<dbReference type="InterPro" id="IPR009057">
    <property type="entry name" value="Homeodomain-like_sf"/>
</dbReference>
<dbReference type="InterPro" id="IPR036388">
    <property type="entry name" value="WH-like_DNA-bd_sf"/>
</dbReference>
<dbReference type="Pfam" id="PF04255">
    <property type="entry name" value="DUF433"/>
    <property type="match status" value="1"/>
</dbReference>
<dbReference type="SUPFAM" id="SSF46689">
    <property type="entry name" value="Homeodomain-like"/>
    <property type="match status" value="1"/>
</dbReference>
<organism>
    <name type="scientific">Archaeoglobus fulgidus (strain ATCC 49558 / DSM 4304 / JCM 9628 / NBRC 100126 / VC-16)</name>
    <dbReference type="NCBI Taxonomy" id="224325"/>
    <lineage>
        <taxon>Archaea</taxon>
        <taxon>Methanobacteriati</taxon>
        <taxon>Methanobacteriota</taxon>
        <taxon>Archaeoglobi</taxon>
        <taxon>Archaeoglobales</taxon>
        <taxon>Archaeoglobaceae</taxon>
        <taxon>Archaeoglobus</taxon>
    </lineage>
</organism>
<proteinExistence type="predicted"/>
<reference key="1">
    <citation type="journal article" date="1997" name="Nature">
        <title>The complete genome sequence of the hyperthermophilic, sulphate-reducing archaeon Archaeoglobus fulgidus.</title>
        <authorList>
            <person name="Klenk H.-P."/>
            <person name="Clayton R.A."/>
            <person name="Tomb J.-F."/>
            <person name="White O."/>
            <person name="Nelson K.E."/>
            <person name="Ketchum K.A."/>
            <person name="Dodson R.J."/>
            <person name="Gwinn M.L."/>
            <person name="Hickey E.K."/>
            <person name="Peterson J.D."/>
            <person name="Richardson D.L."/>
            <person name="Kerlavage A.R."/>
            <person name="Graham D.E."/>
            <person name="Kyrpides N.C."/>
            <person name="Fleischmann R.D."/>
            <person name="Quackenbush J."/>
            <person name="Lee N.H."/>
            <person name="Sutton G.G."/>
            <person name="Gill S.R."/>
            <person name="Kirkness E.F."/>
            <person name="Dougherty B.A."/>
            <person name="McKenney K."/>
            <person name="Adams M.D."/>
            <person name="Loftus B.J."/>
            <person name="Peterson S.N."/>
            <person name="Reich C.I."/>
            <person name="McNeil L.K."/>
            <person name="Badger J.H."/>
            <person name="Glodek A."/>
            <person name="Zhou L."/>
            <person name="Overbeek R."/>
            <person name="Gocayne J.D."/>
            <person name="Weidman J.F."/>
            <person name="McDonald L.A."/>
            <person name="Utterback T.R."/>
            <person name="Cotton M.D."/>
            <person name="Spriggs T."/>
            <person name="Artiach P."/>
            <person name="Kaine B.P."/>
            <person name="Sykes S.M."/>
            <person name="Sadow P.W."/>
            <person name="D'Andrea K.P."/>
            <person name="Bowman C."/>
            <person name="Fujii C."/>
            <person name="Garland S.A."/>
            <person name="Mason T.M."/>
            <person name="Olsen G.J."/>
            <person name="Fraser C.M."/>
            <person name="Smith H.O."/>
            <person name="Woese C.R."/>
            <person name="Venter J.C."/>
        </authorList>
    </citation>
    <scope>NUCLEOTIDE SEQUENCE [LARGE SCALE GENOMIC DNA]</scope>
    <source>
        <strain>ATCC 49558 / DSM 4304 / JCM 9628 / NBRC 100126 / VC-16</strain>
    </source>
</reference>
<feature type="chain" id="PRO_0000127897" description="Uncharacterized protein AF_0609">
    <location>
        <begin position="1"/>
        <end position="36"/>
    </location>
</feature>
<sequence length="36" mass="4161">MERMVVDSKVMVGKPVIKGTRIPVDANVRIRNLQFY</sequence>
<gene>
    <name type="ordered locus">AF_0609</name>
</gene>
<protein>
    <recommendedName>
        <fullName>Uncharacterized protein AF_0609</fullName>
    </recommendedName>
</protein>